<keyword id="KW-0093">Biotin biosynthesis</keyword>
<keyword id="KW-0489">Methyltransferase</keyword>
<keyword id="KW-0949">S-adenosyl-L-methionine</keyword>
<keyword id="KW-0808">Transferase</keyword>
<name>BIOC_HAMD5</name>
<protein>
    <recommendedName>
        <fullName evidence="1">Malonyl-[acyl-carrier protein] O-methyltransferase</fullName>
        <shortName evidence="1">Malonyl-ACP O-methyltransferase</shortName>
        <ecNumber evidence="1">2.1.1.197</ecNumber>
    </recommendedName>
    <alternativeName>
        <fullName evidence="1">Biotin synthesis protein BioC</fullName>
    </alternativeName>
</protein>
<proteinExistence type="inferred from homology"/>
<gene>
    <name evidence="1" type="primary">bioC</name>
    <name type="ordered locus">HDEF_1201</name>
</gene>
<feature type="chain" id="PRO_0000412503" description="Malonyl-[acyl-carrier protein] O-methyltransferase">
    <location>
        <begin position="1"/>
        <end position="258"/>
    </location>
</feature>
<accession>C4K5L7</accession>
<dbReference type="EC" id="2.1.1.197" evidence="1"/>
<dbReference type="EMBL" id="CP001277">
    <property type="protein sequence ID" value="ACQ67860.1"/>
    <property type="molecule type" value="Genomic_DNA"/>
</dbReference>
<dbReference type="RefSeq" id="WP_015873654.1">
    <property type="nucleotide sequence ID" value="NC_012751.1"/>
</dbReference>
<dbReference type="SMR" id="C4K5L7"/>
<dbReference type="STRING" id="572265.HDEF_1201"/>
<dbReference type="GeneID" id="66260915"/>
<dbReference type="KEGG" id="hde:HDEF_1201"/>
<dbReference type="eggNOG" id="COG2226">
    <property type="taxonomic scope" value="Bacteria"/>
</dbReference>
<dbReference type="HOGENOM" id="CLU_046586_2_2_6"/>
<dbReference type="UniPathway" id="UPA00078"/>
<dbReference type="Proteomes" id="UP000002334">
    <property type="component" value="Chromosome"/>
</dbReference>
<dbReference type="GO" id="GO:0010340">
    <property type="term" value="F:carboxyl-O-methyltransferase activity"/>
    <property type="evidence" value="ECO:0007669"/>
    <property type="project" value="UniProtKB-UniRule"/>
</dbReference>
<dbReference type="GO" id="GO:0102130">
    <property type="term" value="F:malonyl-CoA methyltransferase activity"/>
    <property type="evidence" value="ECO:0007669"/>
    <property type="project" value="UniProtKB-EC"/>
</dbReference>
<dbReference type="GO" id="GO:0008757">
    <property type="term" value="F:S-adenosylmethionine-dependent methyltransferase activity"/>
    <property type="evidence" value="ECO:0007669"/>
    <property type="project" value="InterPro"/>
</dbReference>
<dbReference type="GO" id="GO:0009102">
    <property type="term" value="P:biotin biosynthetic process"/>
    <property type="evidence" value="ECO:0007669"/>
    <property type="project" value="UniProtKB-UniRule"/>
</dbReference>
<dbReference type="GO" id="GO:0032259">
    <property type="term" value="P:methylation"/>
    <property type="evidence" value="ECO:0007669"/>
    <property type="project" value="UniProtKB-KW"/>
</dbReference>
<dbReference type="CDD" id="cd02440">
    <property type="entry name" value="AdoMet_MTases"/>
    <property type="match status" value="1"/>
</dbReference>
<dbReference type="Gene3D" id="3.40.50.150">
    <property type="entry name" value="Vaccinia Virus protein VP39"/>
    <property type="match status" value="1"/>
</dbReference>
<dbReference type="HAMAP" id="MF_00835">
    <property type="entry name" value="BioC"/>
    <property type="match status" value="1"/>
</dbReference>
<dbReference type="InterPro" id="IPR011814">
    <property type="entry name" value="BioC"/>
</dbReference>
<dbReference type="InterPro" id="IPR050602">
    <property type="entry name" value="Malonyl-ACP_OMT"/>
</dbReference>
<dbReference type="InterPro" id="IPR013216">
    <property type="entry name" value="Methyltransf_11"/>
</dbReference>
<dbReference type="InterPro" id="IPR029063">
    <property type="entry name" value="SAM-dependent_MTases_sf"/>
</dbReference>
<dbReference type="NCBIfam" id="TIGR02072">
    <property type="entry name" value="BioC"/>
    <property type="match status" value="1"/>
</dbReference>
<dbReference type="PANTHER" id="PTHR13090">
    <property type="entry name" value="ARGININE-HYDROXYLASE NDUFAF5, MITOCHONDRIAL"/>
    <property type="match status" value="1"/>
</dbReference>
<dbReference type="PANTHER" id="PTHR13090:SF1">
    <property type="entry name" value="ARGININE-HYDROXYLASE NDUFAF5, MITOCHONDRIAL"/>
    <property type="match status" value="1"/>
</dbReference>
<dbReference type="Pfam" id="PF08241">
    <property type="entry name" value="Methyltransf_11"/>
    <property type="match status" value="1"/>
</dbReference>
<dbReference type="SUPFAM" id="SSF53335">
    <property type="entry name" value="S-adenosyl-L-methionine-dependent methyltransferases"/>
    <property type="match status" value="1"/>
</dbReference>
<evidence type="ECO:0000255" key="1">
    <source>
        <dbReference type="HAMAP-Rule" id="MF_00835"/>
    </source>
</evidence>
<reference key="1">
    <citation type="journal article" date="2009" name="Proc. Natl. Acad. Sci. U.S.A.">
        <title>Hamiltonella defensa, genome evolution of protective bacterial endosymbiont from pathogenic ancestors.</title>
        <authorList>
            <person name="Degnan P.H."/>
            <person name="Yu Y."/>
            <person name="Sisneros N."/>
            <person name="Wing R.A."/>
            <person name="Moran N.A."/>
        </authorList>
    </citation>
    <scope>NUCLEOTIDE SEQUENCE [LARGE SCALE GENOMIC DNA]</scope>
    <source>
        <strain>5AT</strain>
    </source>
</reference>
<organism>
    <name type="scientific">Hamiltonella defensa subsp. Acyrthosiphon pisum (strain 5AT)</name>
    <dbReference type="NCBI Taxonomy" id="572265"/>
    <lineage>
        <taxon>Bacteria</taxon>
        <taxon>Pseudomonadati</taxon>
        <taxon>Pseudomonadota</taxon>
        <taxon>Gammaproteobacteria</taxon>
        <taxon>Enterobacterales</taxon>
        <taxon>Enterobacteriaceae</taxon>
        <taxon>aphid secondary symbionts</taxon>
        <taxon>Candidatus Hamiltonella</taxon>
    </lineage>
</organism>
<sequence length="258" mass="29323">MISKNFFIESVNKTAIASAFSRAAHSYEQAASLQKEVGFRLLQMTGDIKKSWVLDAGCGTGYFSQFWRQKGNRVLSLDLSFEMLKKAKKKSAAQAYLLADIEHLPILDQKIDLCFSNMAIQWCDDLKVVLAEFHRVTRSGGVILFSTLAMGSLKELAQAWQKVDEEPHINRFLSFEEIQQICTPYHSELKMCLSKVCFPDLRSLIQSLRGVGATHLHRGRKVGLSSRARIQKLENAYPVKFGEYPLSYQLVYGIIYRD</sequence>
<comment type="function">
    <text evidence="1">Converts the free carboxyl group of a malonyl-thioester to its methyl ester by transfer of a methyl group from S-adenosyl-L-methionine (SAM). It allows to synthesize pimeloyl-ACP via the fatty acid synthetic pathway.</text>
</comment>
<comment type="catalytic activity">
    <reaction evidence="1">
        <text>malonyl-[ACP] + S-adenosyl-L-methionine = malonyl-[ACP] methyl ester + S-adenosyl-L-homocysteine</text>
        <dbReference type="Rhea" id="RHEA:17105"/>
        <dbReference type="Rhea" id="RHEA-COMP:9623"/>
        <dbReference type="Rhea" id="RHEA-COMP:9954"/>
        <dbReference type="ChEBI" id="CHEBI:57856"/>
        <dbReference type="ChEBI" id="CHEBI:59789"/>
        <dbReference type="ChEBI" id="CHEBI:78449"/>
        <dbReference type="ChEBI" id="CHEBI:78845"/>
        <dbReference type="EC" id="2.1.1.197"/>
    </reaction>
</comment>
<comment type="pathway">
    <text evidence="1">Cofactor biosynthesis; biotin biosynthesis.</text>
</comment>
<comment type="similarity">
    <text evidence="1">Belongs to the methyltransferase superfamily.</text>
</comment>